<name>VEMP_BC279</name>
<accession>Q0Q473</accession>
<sequence>MYSFVSEETGTLIVNSVLLFFAFVVFLLVTLAILTALRLCAYCCNIVNVSLVKPTVYVYSRVKNLNSSEGVPDLLV</sequence>
<feature type="chain" id="PRO_0000289931" description="Envelope small membrane protein">
    <location>
        <begin position="1"/>
        <end position="76"/>
    </location>
</feature>
<feature type="topological domain" description="Virion surface" evidence="1">
    <location>
        <begin position="1"/>
        <end position="16"/>
    </location>
</feature>
<feature type="transmembrane region" description="Helical" evidence="1">
    <location>
        <begin position="17"/>
        <end position="37"/>
    </location>
</feature>
<feature type="topological domain" description="Intravirion" evidence="1">
    <location>
        <begin position="38"/>
        <end position="76"/>
    </location>
</feature>
<proteinExistence type="inferred from homology"/>
<gene>
    <name evidence="1" type="primary">E</name>
    <name type="synonym">sM</name>
    <name type="ORF">4</name>
</gene>
<organismHost>
    <name type="scientific">Rhinolophus macrotis</name>
    <name type="common">Big-eared horseshoe bat</name>
    <dbReference type="NCBI Taxonomy" id="196889"/>
</organismHost>
<dbReference type="EMBL" id="DQ648857">
    <property type="protein sequence ID" value="ABG47071.1"/>
    <property type="molecule type" value="Genomic_RNA"/>
</dbReference>
<dbReference type="SMR" id="Q0Q473"/>
<dbReference type="Proteomes" id="UP000006573">
    <property type="component" value="Genome"/>
</dbReference>
<dbReference type="GO" id="GO:0044178">
    <property type="term" value="C:host cell Golgi membrane"/>
    <property type="evidence" value="ECO:0007669"/>
    <property type="project" value="UniProtKB-SubCell"/>
</dbReference>
<dbReference type="GO" id="GO:0016020">
    <property type="term" value="C:membrane"/>
    <property type="evidence" value="ECO:0007669"/>
    <property type="project" value="UniProtKB-UniRule"/>
</dbReference>
<dbReference type="GO" id="GO:0140975">
    <property type="term" value="P:disruption of cellular anatomical structure in another organism"/>
    <property type="evidence" value="ECO:0007669"/>
    <property type="project" value="UniProtKB-UniRule"/>
</dbReference>
<dbReference type="GO" id="GO:0046760">
    <property type="term" value="P:viral budding from Golgi membrane"/>
    <property type="evidence" value="ECO:0007669"/>
    <property type="project" value="UniProtKB-UniRule"/>
</dbReference>
<dbReference type="CDD" id="cd21536">
    <property type="entry name" value="SARS-CoV-2_E"/>
    <property type="match status" value="1"/>
</dbReference>
<dbReference type="Gene3D" id="6.10.250.1810">
    <property type="match status" value="1"/>
</dbReference>
<dbReference type="HAMAP" id="MF_04204">
    <property type="entry name" value="BETA_CORONA_E"/>
    <property type="match status" value="1"/>
</dbReference>
<dbReference type="InterPro" id="IPR043506">
    <property type="entry name" value="E_protein_bCoV"/>
</dbReference>
<dbReference type="InterPro" id="IPR003873">
    <property type="entry name" value="E_protein_CoV"/>
</dbReference>
<dbReference type="InterPro" id="IPR044377">
    <property type="entry name" value="E_SARS-CoV-2"/>
</dbReference>
<dbReference type="Pfam" id="PF02723">
    <property type="entry name" value="CoV_E"/>
    <property type="match status" value="1"/>
</dbReference>
<dbReference type="PROSITE" id="PS51926">
    <property type="entry name" value="COV_E"/>
    <property type="match status" value="1"/>
</dbReference>
<protein>
    <recommendedName>
        <fullName evidence="1">Envelope small membrane protein</fullName>
        <shortName evidence="1">E protein</shortName>
        <shortName evidence="1">sM protein</shortName>
    </recommendedName>
</protein>
<comment type="function">
    <text evidence="1">Plays a central role in virus morphogenesis and assembly. Acts as a viroporin and self-assembles in host membranes forming pentameric protein-lipid pores that allow ion transport. Also plays a role in the induction of apoptosis.</text>
</comment>
<comment type="subunit">
    <text evidence="1">Homopentamer. Interacts with membrane protein M in the budding compartment of the host cell, which is located between endoplasmic reticulum and the Golgi complex. Interacts with Nucleoprotein.</text>
</comment>
<comment type="subcellular location">
    <subcellularLocation>
        <location evidence="1">Host Golgi apparatus membrane</location>
        <topology evidence="1">Single-pass type III membrane protein</topology>
    </subcellularLocation>
    <text evidence="1">The cytoplasmic tail functions as a Golgi complex-targeting signal.</text>
</comment>
<comment type="miscellaneous">
    <text>Bat coronavirus 279/2005 is highly similar to SARS-CoV (SARS-like).</text>
</comment>
<comment type="similarity">
    <text evidence="1">Belongs to the betacoronaviruses E protein family.</text>
</comment>
<reference key="1">
    <citation type="journal article" date="2006" name="J. Virol.">
        <title>Prevalence and genetic diversity of coronaviruses in bats from China.</title>
        <authorList>
            <person name="Tang X.C."/>
            <person name="Zhang J.X."/>
            <person name="Zhang S.Y."/>
            <person name="Wang P."/>
            <person name="Fan X.H."/>
            <person name="Li L.F."/>
            <person name="Li G."/>
            <person name="Dong B.Q."/>
            <person name="Liu W."/>
            <person name="Cheung C.L."/>
            <person name="Xu K.M."/>
            <person name="Song W.J."/>
            <person name="Vijaykrishna D."/>
            <person name="Poon L.L.M."/>
            <person name="Peiris J.S.M."/>
            <person name="Smith G.J."/>
            <person name="Chen H."/>
            <person name="Guan Y."/>
        </authorList>
    </citation>
    <scope>NUCLEOTIDE SEQUENCE [GENOMIC RNA]</scope>
</reference>
<organism>
    <name type="scientific">Bat coronavirus 279/2005</name>
    <name type="common">BtCoV</name>
    <name type="synonym">BtCoV/279/2005</name>
    <dbReference type="NCBI Taxonomy" id="389167"/>
    <lineage>
        <taxon>Viruses</taxon>
        <taxon>Riboviria</taxon>
        <taxon>Orthornavirae</taxon>
        <taxon>Pisuviricota</taxon>
        <taxon>Pisoniviricetes</taxon>
        <taxon>Nidovirales</taxon>
        <taxon>Cornidovirineae</taxon>
        <taxon>Coronaviridae</taxon>
        <taxon>Orthocoronavirinae</taxon>
        <taxon>Betacoronavirus</taxon>
        <taxon>Sarbecovirus</taxon>
        <taxon>Severe acute respiratory syndrome coronavirus</taxon>
    </lineage>
</organism>
<keyword id="KW-0053">Apoptosis</keyword>
<keyword id="KW-1040">Host Golgi apparatus</keyword>
<keyword id="KW-1043">Host membrane</keyword>
<keyword id="KW-0472">Membrane</keyword>
<keyword id="KW-0812">Transmembrane</keyword>
<keyword id="KW-1133">Transmembrane helix</keyword>
<evidence type="ECO:0000255" key="1">
    <source>
        <dbReference type="HAMAP-Rule" id="MF_04204"/>
    </source>
</evidence>